<reference key="1">
    <citation type="submission" date="2005-07" db="EMBL/GenBank/DDBJ databases">
        <authorList>
            <consortium name="NIH - Xenopus Gene Collection (XGC) project"/>
        </authorList>
    </citation>
    <scope>NUCLEOTIDE SEQUENCE [LARGE SCALE MRNA]</scope>
    <source>
        <tissue>Embryo</tissue>
    </source>
</reference>
<feature type="chain" id="PRO_0000371226" description="Protein argonaute-4">
    <location>
        <begin position="1"/>
        <end position="884"/>
    </location>
</feature>
<feature type="domain" description="PAZ" evidence="2">
    <location>
        <begin position="242"/>
        <end position="361"/>
    </location>
</feature>
<feature type="domain" description="Piwi" evidence="1">
    <location>
        <begin position="532"/>
        <end position="843"/>
    </location>
</feature>
<feature type="region of interest" description="Disordered" evidence="3">
    <location>
        <begin position="848"/>
        <end position="870"/>
    </location>
</feature>
<dbReference type="EMBL" id="BC098982">
    <property type="protein sequence ID" value="AAH98982.1"/>
    <property type="molecule type" value="mRNA"/>
</dbReference>
<dbReference type="RefSeq" id="NP_001089574.1">
    <property type="nucleotide sequence ID" value="NM_001096105.1"/>
</dbReference>
<dbReference type="SMR" id="Q4KLV6"/>
<dbReference type="IntAct" id="Q4KLV6">
    <property type="interactions" value="1"/>
</dbReference>
<dbReference type="DNASU" id="734630"/>
<dbReference type="GeneID" id="734630"/>
<dbReference type="KEGG" id="xla:734630"/>
<dbReference type="AGR" id="Xenbase:XB-GENE-1006885"/>
<dbReference type="CTD" id="734630"/>
<dbReference type="Xenbase" id="XB-GENE-1006885">
    <property type="gene designation" value="ago4.L"/>
</dbReference>
<dbReference type="OrthoDB" id="10252740at2759"/>
<dbReference type="Proteomes" id="UP000186698">
    <property type="component" value="Chromosome 2L"/>
</dbReference>
<dbReference type="Bgee" id="734630">
    <property type="expression patterns" value="Expressed in egg cell and 19 other cell types or tissues"/>
</dbReference>
<dbReference type="GO" id="GO:0005737">
    <property type="term" value="C:cytoplasm"/>
    <property type="evidence" value="ECO:0000318"/>
    <property type="project" value="GO_Central"/>
</dbReference>
<dbReference type="GO" id="GO:0036464">
    <property type="term" value="C:cytoplasmic ribonucleoprotein granule"/>
    <property type="evidence" value="ECO:0000318"/>
    <property type="project" value="GO_Central"/>
</dbReference>
<dbReference type="GO" id="GO:0005634">
    <property type="term" value="C:nucleus"/>
    <property type="evidence" value="ECO:0000318"/>
    <property type="project" value="GO_Central"/>
</dbReference>
<dbReference type="GO" id="GO:0000932">
    <property type="term" value="C:P-body"/>
    <property type="evidence" value="ECO:0007669"/>
    <property type="project" value="UniProtKB-SubCell"/>
</dbReference>
<dbReference type="GO" id="GO:0016442">
    <property type="term" value="C:RISC complex"/>
    <property type="evidence" value="ECO:0000318"/>
    <property type="project" value="GO_Central"/>
</dbReference>
<dbReference type="GO" id="GO:0035198">
    <property type="term" value="F:miRNA binding"/>
    <property type="evidence" value="ECO:0000318"/>
    <property type="project" value="GO_Central"/>
</dbReference>
<dbReference type="GO" id="GO:0004521">
    <property type="term" value="F:RNA endonuclease activity"/>
    <property type="evidence" value="ECO:0000318"/>
    <property type="project" value="GO_Central"/>
</dbReference>
<dbReference type="GO" id="GO:0003727">
    <property type="term" value="F:single-stranded RNA binding"/>
    <property type="evidence" value="ECO:0000318"/>
    <property type="project" value="GO_Central"/>
</dbReference>
<dbReference type="GO" id="GO:0035278">
    <property type="term" value="P:miRNA-mediated gene silencing by inhibition of translation"/>
    <property type="evidence" value="ECO:0000250"/>
    <property type="project" value="UniProtKB"/>
</dbReference>
<dbReference type="GO" id="GO:0006402">
    <property type="term" value="P:mRNA catabolic process"/>
    <property type="evidence" value="ECO:0000250"/>
    <property type="project" value="UniProtKB"/>
</dbReference>
<dbReference type="GO" id="GO:0031054">
    <property type="term" value="P:pre-miRNA processing"/>
    <property type="evidence" value="ECO:0000318"/>
    <property type="project" value="GO_Central"/>
</dbReference>
<dbReference type="GO" id="GO:0035194">
    <property type="term" value="P:regulatory ncRNA-mediated post-transcriptional gene silencing"/>
    <property type="evidence" value="ECO:0000318"/>
    <property type="project" value="GO_Central"/>
</dbReference>
<dbReference type="CDD" id="cd02846">
    <property type="entry name" value="PAZ_argonaute_like"/>
    <property type="match status" value="1"/>
</dbReference>
<dbReference type="CDD" id="cd04657">
    <property type="entry name" value="Piwi_ago-like"/>
    <property type="match status" value="1"/>
</dbReference>
<dbReference type="FunFam" id="2.170.260.10:FF:000001">
    <property type="entry name" value="Protein argonaute-2"/>
    <property type="match status" value="1"/>
</dbReference>
<dbReference type="FunFam" id="3.30.420.10:FF:000001">
    <property type="entry name" value="Protein argonaute-2"/>
    <property type="match status" value="1"/>
</dbReference>
<dbReference type="FunFam" id="3.40.50.2300:FF:000005">
    <property type="entry name" value="Protein argonaute-2"/>
    <property type="match status" value="1"/>
</dbReference>
<dbReference type="Gene3D" id="3.40.50.2300">
    <property type="match status" value="1"/>
</dbReference>
<dbReference type="Gene3D" id="2.170.260.10">
    <property type="entry name" value="paz domain"/>
    <property type="match status" value="1"/>
</dbReference>
<dbReference type="Gene3D" id="3.30.420.10">
    <property type="entry name" value="Ribonuclease H-like superfamily/Ribonuclease H"/>
    <property type="match status" value="1"/>
</dbReference>
<dbReference type="HAMAP" id="MF_03033">
    <property type="entry name" value="AGO4"/>
    <property type="match status" value="1"/>
</dbReference>
<dbReference type="InterPro" id="IPR028604">
    <property type="entry name" value="AGO4"/>
</dbReference>
<dbReference type="InterPro" id="IPR014811">
    <property type="entry name" value="ArgoL1"/>
</dbReference>
<dbReference type="InterPro" id="IPR032472">
    <property type="entry name" value="ArgoL2"/>
</dbReference>
<dbReference type="InterPro" id="IPR032473">
    <property type="entry name" value="Argonaute_Mid_dom"/>
</dbReference>
<dbReference type="InterPro" id="IPR032474">
    <property type="entry name" value="Argonaute_N"/>
</dbReference>
<dbReference type="InterPro" id="IPR003100">
    <property type="entry name" value="PAZ_dom"/>
</dbReference>
<dbReference type="InterPro" id="IPR036085">
    <property type="entry name" value="PAZ_dom_sf"/>
</dbReference>
<dbReference type="InterPro" id="IPR003165">
    <property type="entry name" value="Piwi"/>
</dbReference>
<dbReference type="InterPro" id="IPR045246">
    <property type="entry name" value="Piwi_ago-like"/>
</dbReference>
<dbReference type="InterPro" id="IPR012337">
    <property type="entry name" value="RNaseH-like_sf"/>
</dbReference>
<dbReference type="InterPro" id="IPR036397">
    <property type="entry name" value="RNaseH_sf"/>
</dbReference>
<dbReference type="PANTHER" id="PTHR22891">
    <property type="entry name" value="EUKARYOTIC TRANSLATION INITIATION FACTOR 2C"/>
    <property type="match status" value="1"/>
</dbReference>
<dbReference type="Pfam" id="PF08699">
    <property type="entry name" value="ArgoL1"/>
    <property type="match status" value="1"/>
</dbReference>
<dbReference type="Pfam" id="PF16488">
    <property type="entry name" value="ArgoL2"/>
    <property type="match status" value="1"/>
</dbReference>
<dbReference type="Pfam" id="PF16487">
    <property type="entry name" value="ArgoMid"/>
    <property type="match status" value="1"/>
</dbReference>
<dbReference type="Pfam" id="PF16486">
    <property type="entry name" value="ArgoN"/>
    <property type="match status" value="1"/>
</dbReference>
<dbReference type="Pfam" id="PF02170">
    <property type="entry name" value="PAZ"/>
    <property type="match status" value="1"/>
</dbReference>
<dbReference type="Pfam" id="PF02171">
    <property type="entry name" value="Piwi"/>
    <property type="match status" value="1"/>
</dbReference>
<dbReference type="SMART" id="SM01163">
    <property type="entry name" value="DUF1785"/>
    <property type="match status" value="1"/>
</dbReference>
<dbReference type="SMART" id="SM00949">
    <property type="entry name" value="PAZ"/>
    <property type="match status" value="1"/>
</dbReference>
<dbReference type="SMART" id="SM00950">
    <property type="entry name" value="Piwi"/>
    <property type="match status" value="1"/>
</dbReference>
<dbReference type="SUPFAM" id="SSF101690">
    <property type="entry name" value="PAZ domain"/>
    <property type="match status" value="1"/>
</dbReference>
<dbReference type="SUPFAM" id="SSF53098">
    <property type="entry name" value="Ribonuclease H-like"/>
    <property type="match status" value="1"/>
</dbReference>
<dbReference type="PROSITE" id="PS50821">
    <property type="entry name" value="PAZ"/>
    <property type="match status" value="1"/>
</dbReference>
<dbReference type="PROSITE" id="PS50822">
    <property type="entry name" value="PIWI"/>
    <property type="match status" value="1"/>
</dbReference>
<protein>
    <recommendedName>
        <fullName evidence="1">Protein argonaute-4</fullName>
        <shortName evidence="1">Argonaute4</shortName>
    </recommendedName>
    <alternativeName>
        <fullName>Argonaute RISC catalytic component 4</fullName>
    </alternativeName>
    <alternativeName>
        <fullName evidence="1">Eukaryotic translation initiation factor 2C 4</fullName>
        <shortName evidence="1">eIF-2C 4</shortName>
        <shortName evidence="1">eIF2C 4</shortName>
    </alternativeName>
</protein>
<keyword id="KW-0963">Cytoplasm</keyword>
<keyword id="KW-1185">Reference proteome</keyword>
<keyword id="KW-0687">Ribonucleoprotein</keyword>
<keyword id="KW-0694">RNA-binding</keyword>
<keyword id="KW-0943">RNA-mediated gene silencing</keyword>
<keyword id="KW-0810">Translation regulation</keyword>
<name>AGO4_XENLA</name>
<comment type="function">
    <text evidence="1">Required for RNA-mediated gene silencing (RNAi). Binds to short RNAs such as microRNAs (miRNAs) and represses the translation of mRNAs which are complementary to them. Lacks endonuclease activity and does not appear to cleave target mRNAs.</text>
</comment>
<comment type="subcellular location">
    <subcellularLocation>
        <location evidence="1">Cytoplasm</location>
        <location evidence="1">P-body</location>
    </subcellularLocation>
</comment>
<comment type="similarity">
    <text evidence="1">Belongs to the argonaute family. Ago subfamily.</text>
</comment>
<gene>
    <name type="primary">ago4</name>
    <name type="synonym">eif2c4</name>
</gene>
<evidence type="ECO:0000255" key="1">
    <source>
        <dbReference type="HAMAP-Rule" id="MF_03033"/>
    </source>
</evidence>
<evidence type="ECO:0000255" key="2">
    <source>
        <dbReference type="PROSITE-ProRule" id="PRU00142"/>
    </source>
</evidence>
<evidence type="ECO:0000256" key="3">
    <source>
        <dbReference type="SAM" id="MobiDB-lite"/>
    </source>
</evidence>
<sequence>MGRKTLCESETVCRDVTINGSAGCLQNVGPPPTNLFQPPRRPGLGTLGKPIRLLANHFQVQIPKIDVYHYDVDIKPEKRPRRVNREVVDTMVRHFKMPIFGDNQPGYDGKRNMYTAHPLPIGRDRVDLEVTLPGEGKDQTFKVTIQWVSVVSLQLLLEALSGHLSEVPDDSVQALDVITRHLPSMRYTPVGRSFFSPPEGYYHPLGGGREVWFGFHQSVRPAMWNMMLNIDVSATAFYRAQPVIEFMCEVLDVQNINEQTKPLTDSQRVKFTKEIRGLKVEVTHCGQMKRKYRVCNVTRRPASHQTFPLQLENGQAMECTVAQYFKQKYSLQLKYPHLPCLQVGQEQKHTYLPLEVCNIVAGQRCIKKLTDNQTSTMIKATARSAPDRQEEISRLVKSNSMVGGPDPYLKEFGIVVHNEMTELTGRVLPAPMLQYGGRNKTVATPNQGVWDMRGKQFYAGIEIKVWAVACFAPQKQCREDLLKSFTDQLRKISKDAGMPIQGQPCFCKYAQGADSVEPMFKHLKLTYVGLQLIVVILPGKTPVYAEVKRVGDTLLGMATQCVQVKNVVKTSPQTLSNLCLKINAKLGGINNVLVPHQRPSVFQQPVIFLGADVTHPPAGDGKKPSIAAVVGSMDGHPSRYCATVRVQTSRQETTQELLYSQEVIQDLCNMVRELLIQFYKSTRFKPTRIIYYRGGVSEGQMKQVAWPELMAIRKACISLEEDYRPGITYIVVQKRHHTRLFCSDKTERVGKSGNVPAGTTVDSTITHPSEFDFYLCSHAGIQGTSRPSHYQVLWDDNCFTADELQLLTYQLCHTYVRCTRSVSIPAPAYYARLVAFRARYHLVDKDHDSAEGSHVSGQSNGRDPQALAKAVQIHHDTQHSMYFA</sequence>
<proteinExistence type="evidence at transcript level"/>
<organism>
    <name type="scientific">Xenopus laevis</name>
    <name type="common">African clawed frog</name>
    <dbReference type="NCBI Taxonomy" id="8355"/>
    <lineage>
        <taxon>Eukaryota</taxon>
        <taxon>Metazoa</taxon>
        <taxon>Chordata</taxon>
        <taxon>Craniata</taxon>
        <taxon>Vertebrata</taxon>
        <taxon>Euteleostomi</taxon>
        <taxon>Amphibia</taxon>
        <taxon>Batrachia</taxon>
        <taxon>Anura</taxon>
        <taxon>Pipoidea</taxon>
        <taxon>Pipidae</taxon>
        <taxon>Xenopodinae</taxon>
        <taxon>Xenopus</taxon>
        <taxon>Xenopus</taxon>
    </lineage>
</organism>
<accession>Q4KLV6</accession>